<reference key="1">
    <citation type="submission" date="2007-06" db="EMBL/GenBank/DDBJ databases">
        <title>Complete sequence of Clostridium beijerinckii NCIMB 8052.</title>
        <authorList>
            <consortium name="US DOE Joint Genome Institute"/>
            <person name="Copeland A."/>
            <person name="Lucas S."/>
            <person name="Lapidus A."/>
            <person name="Barry K."/>
            <person name="Detter J.C."/>
            <person name="Glavina del Rio T."/>
            <person name="Hammon N."/>
            <person name="Israni S."/>
            <person name="Dalin E."/>
            <person name="Tice H."/>
            <person name="Pitluck S."/>
            <person name="Sims D."/>
            <person name="Brettin T."/>
            <person name="Bruce D."/>
            <person name="Tapia R."/>
            <person name="Brainard J."/>
            <person name="Schmutz J."/>
            <person name="Larimer F."/>
            <person name="Land M."/>
            <person name="Hauser L."/>
            <person name="Kyrpides N."/>
            <person name="Mikhailova N."/>
            <person name="Bennet G."/>
            <person name="Cann I."/>
            <person name="Chen J.-S."/>
            <person name="Contreras A.L."/>
            <person name="Jones D."/>
            <person name="Kashket E."/>
            <person name="Mitchell W."/>
            <person name="Stoddard S."/>
            <person name="Schwarz W."/>
            <person name="Qureshi N."/>
            <person name="Young M."/>
            <person name="Shi Z."/>
            <person name="Ezeji T."/>
            <person name="White B."/>
            <person name="Blaschek H."/>
            <person name="Richardson P."/>
        </authorList>
    </citation>
    <scope>NUCLEOTIDE SEQUENCE [LARGE SCALE GENOMIC DNA]</scope>
    <source>
        <strain>ATCC 51743 / NCIMB 8052</strain>
    </source>
</reference>
<feature type="chain" id="PRO_1000079980" description="Exodeoxyribonuclease 7 large subunit">
    <location>
        <begin position="1"/>
        <end position="399"/>
    </location>
</feature>
<comment type="function">
    <text evidence="1">Bidirectionally degrades single-stranded DNA into large acid-insoluble oligonucleotides, which are then degraded further into small acid-soluble oligonucleotides.</text>
</comment>
<comment type="catalytic activity">
    <reaction evidence="1">
        <text>Exonucleolytic cleavage in either 5'- to 3'- or 3'- to 5'-direction to yield nucleoside 5'-phosphates.</text>
        <dbReference type="EC" id="3.1.11.6"/>
    </reaction>
</comment>
<comment type="subunit">
    <text evidence="1">Heterooligomer composed of large and small subunits.</text>
</comment>
<comment type="subcellular location">
    <subcellularLocation>
        <location evidence="1">Cytoplasm</location>
    </subcellularLocation>
</comment>
<comment type="similarity">
    <text evidence="1">Belongs to the XseA family.</text>
</comment>
<proteinExistence type="inferred from homology"/>
<organism>
    <name type="scientific">Clostridium beijerinckii (strain ATCC 51743 / NCIMB 8052)</name>
    <name type="common">Clostridium acetobutylicum</name>
    <dbReference type="NCBI Taxonomy" id="290402"/>
    <lineage>
        <taxon>Bacteria</taxon>
        <taxon>Bacillati</taxon>
        <taxon>Bacillota</taxon>
        <taxon>Clostridia</taxon>
        <taxon>Eubacteriales</taxon>
        <taxon>Clostridiaceae</taxon>
        <taxon>Clostridium</taxon>
    </lineage>
</organism>
<evidence type="ECO:0000255" key="1">
    <source>
        <dbReference type="HAMAP-Rule" id="MF_00378"/>
    </source>
</evidence>
<sequence>MNIKTLTVSEVTNYIKRMLDNDFILSNLSVKGEISNLKYHSSGHIYFTLKDSSGRINCVMFKSNAVLLDFPLEEGMEVIIKGRASIYPATGSFQLYCDEIRKEGLGDLFIKFEKLKEKLSKEGYFDEAYKKELPKYPQRIGIVTSPTGAAIRDIINVSTRRSSLVDVVLYPAKVQGSGAYKDIISGINYFNRKKSVDIIIVGRGGGSIEELWNFNEEELAKAIFNSKIPIISAVGHEIDFTICDFVADVRAATPSQGAEIAVPLSDNIKDRLLDISKNLDKYISDRLDTCRNNLSGAQRILKVHSPMAKISNSYLEVDRLQDRLNFAMRTKIKGEKNKVENLNNLLFAHNPIKVISKGYAIIKDNENNIITSKEQLNEDKNIEVILKDGNIEGKFIPSK</sequence>
<protein>
    <recommendedName>
        <fullName evidence="1">Exodeoxyribonuclease 7 large subunit</fullName>
        <ecNumber evidence="1">3.1.11.6</ecNumber>
    </recommendedName>
    <alternativeName>
        <fullName evidence="1">Exodeoxyribonuclease VII large subunit</fullName>
        <shortName evidence="1">Exonuclease VII large subunit</shortName>
    </alternativeName>
</protein>
<keyword id="KW-0963">Cytoplasm</keyword>
<keyword id="KW-0269">Exonuclease</keyword>
<keyword id="KW-0378">Hydrolase</keyword>
<keyword id="KW-0540">Nuclease</keyword>
<gene>
    <name evidence="1" type="primary">xseA</name>
    <name type="ordered locus">Cbei_1703</name>
</gene>
<dbReference type="EC" id="3.1.11.6" evidence="1"/>
<dbReference type="EMBL" id="CP000721">
    <property type="protein sequence ID" value="ABR33875.1"/>
    <property type="molecule type" value="Genomic_DNA"/>
</dbReference>
<dbReference type="RefSeq" id="WP_011969027.1">
    <property type="nucleotide sequence ID" value="NC_009617.1"/>
</dbReference>
<dbReference type="SMR" id="A6LU45"/>
<dbReference type="KEGG" id="cbe:Cbei_1703"/>
<dbReference type="eggNOG" id="COG1570">
    <property type="taxonomic scope" value="Bacteria"/>
</dbReference>
<dbReference type="HOGENOM" id="CLU_023625_2_0_9"/>
<dbReference type="Proteomes" id="UP000000565">
    <property type="component" value="Chromosome"/>
</dbReference>
<dbReference type="GO" id="GO:0005737">
    <property type="term" value="C:cytoplasm"/>
    <property type="evidence" value="ECO:0007669"/>
    <property type="project" value="UniProtKB-SubCell"/>
</dbReference>
<dbReference type="GO" id="GO:0009318">
    <property type="term" value="C:exodeoxyribonuclease VII complex"/>
    <property type="evidence" value="ECO:0007669"/>
    <property type="project" value="InterPro"/>
</dbReference>
<dbReference type="GO" id="GO:0008855">
    <property type="term" value="F:exodeoxyribonuclease VII activity"/>
    <property type="evidence" value="ECO:0007669"/>
    <property type="project" value="UniProtKB-UniRule"/>
</dbReference>
<dbReference type="GO" id="GO:0003676">
    <property type="term" value="F:nucleic acid binding"/>
    <property type="evidence" value="ECO:0007669"/>
    <property type="project" value="InterPro"/>
</dbReference>
<dbReference type="GO" id="GO:0006308">
    <property type="term" value="P:DNA catabolic process"/>
    <property type="evidence" value="ECO:0007669"/>
    <property type="project" value="UniProtKB-UniRule"/>
</dbReference>
<dbReference type="CDD" id="cd04489">
    <property type="entry name" value="ExoVII_LU_OBF"/>
    <property type="match status" value="1"/>
</dbReference>
<dbReference type="HAMAP" id="MF_00378">
    <property type="entry name" value="Exonuc_7_L"/>
    <property type="match status" value="1"/>
</dbReference>
<dbReference type="InterPro" id="IPR003753">
    <property type="entry name" value="Exonuc_VII_L"/>
</dbReference>
<dbReference type="InterPro" id="IPR020579">
    <property type="entry name" value="Exonuc_VII_lsu_C"/>
</dbReference>
<dbReference type="InterPro" id="IPR025824">
    <property type="entry name" value="OB-fold_nuc-bd_dom"/>
</dbReference>
<dbReference type="NCBIfam" id="TIGR00237">
    <property type="entry name" value="xseA"/>
    <property type="match status" value="1"/>
</dbReference>
<dbReference type="PANTHER" id="PTHR30008">
    <property type="entry name" value="EXODEOXYRIBONUCLEASE 7 LARGE SUBUNIT"/>
    <property type="match status" value="1"/>
</dbReference>
<dbReference type="PANTHER" id="PTHR30008:SF0">
    <property type="entry name" value="EXODEOXYRIBONUCLEASE 7 LARGE SUBUNIT"/>
    <property type="match status" value="1"/>
</dbReference>
<dbReference type="Pfam" id="PF02601">
    <property type="entry name" value="Exonuc_VII_L"/>
    <property type="match status" value="2"/>
</dbReference>
<dbReference type="Pfam" id="PF13742">
    <property type="entry name" value="tRNA_anti_2"/>
    <property type="match status" value="1"/>
</dbReference>
<name>EX7L_CLOB8</name>
<accession>A6LU45</accession>